<organism>
    <name type="scientific">Azotobacter vinelandii (strain DJ / ATCC BAA-1303)</name>
    <dbReference type="NCBI Taxonomy" id="322710"/>
    <lineage>
        <taxon>Bacteria</taxon>
        <taxon>Pseudomonadati</taxon>
        <taxon>Pseudomonadota</taxon>
        <taxon>Gammaproteobacteria</taxon>
        <taxon>Pseudomonadales</taxon>
        <taxon>Pseudomonadaceae</taxon>
        <taxon>Azotobacter</taxon>
    </lineage>
</organism>
<protein>
    <recommendedName>
        <fullName evidence="1">Large ribosomal subunit protein bL19</fullName>
    </recommendedName>
    <alternativeName>
        <fullName evidence="2">50S ribosomal protein L19</fullName>
    </alternativeName>
</protein>
<comment type="function">
    <text evidence="1">This protein is located at the 30S-50S ribosomal subunit interface and may play a role in the structure and function of the aminoacyl-tRNA binding site.</text>
</comment>
<comment type="similarity">
    <text evidence="1">Belongs to the bacterial ribosomal protein bL19 family.</text>
</comment>
<name>RL19_AZOVD</name>
<reference key="1">
    <citation type="journal article" date="2009" name="J. Bacteriol.">
        <title>Genome sequence of Azotobacter vinelandii, an obligate aerobe specialized to support diverse anaerobic metabolic processes.</title>
        <authorList>
            <person name="Setubal J.C."/>
            <person name="Dos Santos P."/>
            <person name="Goldman B.S."/>
            <person name="Ertesvaag H."/>
            <person name="Espin G."/>
            <person name="Rubio L.M."/>
            <person name="Valla S."/>
            <person name="Almeida N.F."/>
            <person name="Balasubramanian D."/>
            <person name="Cromes L."/>
            <person name="Curatti L."/>
            <person name="Du Z."/>
            <person name="Godsy E."/>
            <person name="Goodner B."/>
            <person name="Hellner-Burris K."/>
            <person name="Hernandez J.A."/>
            <person name="Houmiel K."/>
            <person name="Imperial J."/>
            <person name="Kennedy C."/>
            <person name="Larson T.J."/>
            <person name="Latreille P."/>
            <person name="Ligon L.S."/>
            <person name="Lu J."/>
            <person name="Maerk M."/>
            <person name="Miller N.M."/>
            <person name="Norton S."/>
            <person name="O'Carroll I.P."/>
            <person name="Paulsen I."/>
            <person name="Raulfs E.C."/>
            <person name="Roemer R."/>
            <person name="Rosser J."/>
            <person name="Segura D."/>
            <person name="Slater S."/>
            <person name="Stricklin S.L."/>
            <person name="Studholme D.J."/>
            <person name="Sun J."/>
            <person name="Viana C.J."/>
            <person name="Wallin E."/>
            <person name="Wang B."/>
            <person name="Wheeler C."/>
            <person name="Zhu H."/>
            <person name="Dean D.R."/>
            <person name="Dixon R."/>
            <person name="Wood D."/>
        </authorList>
    </citation>
    <scope>NUCLEOTIDE SEQUENCE [LARGE SCALE GENOMIC DNA]</scope>
    <source>
        <strain>DJ / ATCC BAA-1303</strain>
    </source>
</reference>
<proteinExistence type="inferred from homology"/>
<keyword id="KW-0687">Ribonucleoprotein</keyword>
<keyword id="KW-0689">Ribosomal protein</keyword>
<feature type="chain" id="PRO_1000205880" description="Large ribosomal subunit protein bL19">
    <location>
        <begin position="1"/>
        <end position="116"/>
    </location>
</feature>
<gene>
    <name evidence="1" type="primary">rplS</name>
    <name type="ordered locus">Avin_39530</name>
</gene>
<accession>C1DSZ9</accession>
<sequence>MTNKIIQQLEAEQMSKEIPAFAPGDTVIVQVKVKEGERQRLQAFEGVVIGKRNRGLNSAFTVRKISSGVGVERTFQTYSPLVDSITVKRRGDVRKAKLYYLRDLSGKAARIKEKLS</sequence>
<evidence type="ECO:0000255" key="1">
    <source>
        <dbReference type="HAMAP-Rule" id="MF_00402"/>
    </source>
</evidence>
<evidence type="ECO:0000305" key="2"/>
<dbReference type="EMBL" id="CP001157">
    <property type="protein sequence ID" value="ACO80092.1"/>
    <property type="molecule type" value="Genomic_DNA"/>
</dbReference>
<dbReference type="RefSeq" id="WP_012702467.1">
    <property type="nucleotide sequence ID" value="NC_012560.1"/>
</dbReference>
<dbReference type="SMR" id="C1DSZ9"/>
<dbReference type="STRING" id="322710.Avin_39530"/>
<dbReference type="EnsemblBacteria" id="ACO80092">
    <property type="protein sequence ID" value="ACO80092"/>
    <property type="gene ID" value="Avin_39530"/>
</dbReference>
<dbReference type="GeneID" id="88186908"/>
<dbReference type="KEGG" id="avn:Avin_39530"/>
<dbReference type="eggNOG" id="COG0335">
    <property type="taxonomic scope" value="Bacteria"/>
</dbReference>
<dbReference type="HOGENOM" id="CLU_103507_2_1_6"/>
<dbReference type="OrthoDB" id="9803541at2"/>
<dbReference type="Proteomes" id="UP000002424">
    <property type="component" value="Chromosome"/>
</dbReference>
<dbReference type="GO" id="GO:0022625">
    <property type="term" value="C:cytosolic large ribosomal subunit"/>
    <property type="evidence" value="ECO:0007669"/>
    <property type="project" value="TreeGrafter"/>
</dbReference>
<dbReference type="GO" id="GO:0003735">
    <property type="term" value="F:structural constituent of ribosome"/>
    <property type="evidence" value="ECO:0007669"/>
    <property type="project" value="InterPro"/>
</dbReference>
<dbReference type="GO" id="GO:0006412">
    <property type="term" value="P:translation"/>
    <property type="evidence" value="ECO:0007669"/>
    <property type="project" value="UniProtKB-UniRule"/>
</dbReference>
<dbReference type="FunFam" id="2.30.30.790:FF:000001">
    <property type="entry name" value="50S ribosomal protein L19"/>
    <property type="match status" value="1"/>
</dbReference>
<dbReference type="Gene3D" id="2.30.30.790">
    <property type="match status" value="1"/>
</dbReference>
<dbReference type="HAMAP" id="MF_00402">
    <property type="entry name" value="Ribosomal_bL19"/>
    <property type="match status" value="1"/>
</dbReference>
<dbReference type="InterPro" id="IPR001857">
    <property type="entry name" value="Ribosomal_bL19"/>
</dbReference>
<dbReference type="InterPro" id="IPR018257">
    <property type="entry name" value="Ribosomal_bL19_CS"/>
</dbReference>
<dbReference type="InterPro" id="IPR038657">
    <property type="entry name" value="Ribosomal_bL19_sf"/>
</dbReference>
<dbReference type="InterPro" id="IPR008991">
    <property type="entry name" value="Translation_prot_SH3-like_sf"/>
</dbReference>
<dbReference type="NCBIfam" id="TIGR01024">
    <property type="entry name" value="rplS_bact"/>
    <property type="match status" value="1"/>
</dbReference>
<dbReference type="PANTHER" id="PTHR15680:SF9">
    <property type="entry name" value="LARGE RIBOSOMAL SUBUNIT PROTEIN BL19M"/>
    <property type="match status" value="1"/>
</dbReference>
<dbReference type="PANTHER" id="PTHR15680">
    <property type="entry name" value="RIBOSOMAL PROTEIN L19"/>
    <property type="match status" value="1"/>
</dbReference>
<dbReference type="Pfam" id="PF01245">
    <property type="entry name" value="Ribosomal_L19"/>
    <property type="match status" value="1"/>
</dbReference>
<dbReference type="PIRSF" id="PIRSF002191">
    <property type="entry name" value="Ribosomal_L19"/>
    <property type="match status" value="1"/>
</dbReference>
<dbReference type="PRINTS" id="PR00061">
    <property type="entry name" value="RIBOSOMALL19"/>
</dbReference>
<dbReference type="SUPFAM" id="SSF50104">
    <property type="entry name" value="Translation proteins SH3-like domain"/>
    <property type="match status" value="1"/>
</dbReference>
<dbReference type="PROSITE" id="PS01015">
    <property type="entry name" value="RIBOSOMAL_L19"/>
    <property type="match status" value="1"/>
</dbReference>